<organism evidence="7">
    <name type="scientific">Hypocrea jecorina (strain QM6a)</name>
    <name type="common">Trichoderma reesei</name>
    <dbReference type="NCBI Taxonomy" id="431241"/>
    <lineage>
        <taxon>Eukaryota</taxon>
        <taxon>Fungi</taxon>
        <taxon>Dikarya</taxon>
        <taxon>Ascomycota</taxon>
        <taxon>Pezizomycotina</taxon>
        <taxon>Sordariomycetes</taxon>
        <taxon>Hypocreomycetidae</taxon>
        <taxon>Hypocreales</taxon>
        <taxon>Hypocreaceae</taxon>
        <taxon>Trichoderma</taxon>
    </lineage>
</organism>
<proteinExistence type="evidence at protein level"/>
<feature type="chain" id="PRO_0000457276" description="Cis-3-hydroxy-L-proline dehydratase">
    <location>
        <begin position="1"/>
        <end position="596"/>
    </location>
</feature>
<feature type="active site" description="Proton acceptor" evidence="2">
    <location>
        <position position="67"/>
    </location>
</feature>
<comment type="function">
    <text evidence="3">Catalyzes the dehydration of cis-3-hydroxy-L-proline (c3LHyp) to Delta(1)-pyrroline-2-carboxylate (Pyr2C). No activity with L-proline, trans-4-hydroxy-L-proline (t4LHyp), cis-4-hydroxy-L-proline (c4LHyp), trans-3-hydroxy-L-proline (t3LHyp), D-proline, cis-4-hydroxy-D-proline (c4DHyp), trans-4-hydroxy-D-proline (t4DHyp) or L-serine as substrates. Because of the low catalytic efficiency, C3LHyp is likely not a main physiological substrate of this enzyme in H.jecorina.</text>
</comment>
<comment type="catalytic activity">
    <reaction evidence="3">
        <text>cis-3-hydroxy-L-proline = 1-pyrroline-2-carboxylate + H2O</text>
        <dbReference type="Rhea" id="RHEA:47624"/>
        <dbReference type="ChEBI" id="CHEBI:15377"/>
        <dbReference type="ChEBI" id="CHEBI:39785"/>
        <dbReference type="ChEBI" id="CHEBI:60041"/>
        <dbReference type="EC" id="4.2.1.171"/>
    </reaction>
    <physiologicalReaction direction="left-to-right" evidence="3">
        <dbReference type="Rhea" id="RHEA:47625"/>
    </physiologicalReaction>
</comment>
<comment type="cofactor">
    <cofactor evidence="1">
        <name>Fe(3+)</name>
        <dbReference type="ChEBI" id="CHEBI:29034"/>
    </cofactor>
</comment>
<comment type="activity regulation">
    <text evidence="3">Inhibited by Zn(2+). Not inhibited by pyrrole-2-carboxylate nor its derivative 2-thiophenecarboxylate.</text>
</comment>
<comment type="biophysicochemical properties">
    <kinetics>
        <KM evidence="3">23.4 mM for cis-3-hydroxy-L-proline (at pH 8.0)</KM>
        <Vmax evidence="3">2.06 umol/min/mg enzyme</Vmax>
        <text evidence="3">kcat is 535 min(-1). kcat/KM is 22.8 min(-1) mM(-1).</text>
    </kinetics>
</comment>
<comment type="subunit">
    <text evidence="3">Monomer.</text>
</comment>
<comment type="similarity">
    <text evidence="5">Belongs to the AcnX family.</text>
</comment>
<dbReference type="EC" id="4.2.1.171" evidence="3"/>
<dbReference type="EMBL" id="GL985060">
    <property type="protein sequence ID" value="EGR50197.1"/>
    <property type="molecule type" value="Genomic_DNA"/>
</dbReference>
<dbReference type="RefSeq" id="XP_006963719.1">
    <property type="nucleotide sequence ID" value="XM_006963657.1"/>
</dbReference>
<dbReference type="SMR" id="G0REW7"/>
<dbReference type="STRING" id="431241.G0REW7"/>
<dbReference type="EnsemblFungi" id="EGR50197">
    <property type="protein sequence ID" value="EGR50197"/>
    <property type="gene ID" value="TRIREDRAFT_59073"/>
</dbReference>
<dbReference type="GeneID" id="18486412"/>
<dbReference type="KEGG" id="tre:TRIREDRAFT_59073"/>
<dbReference type="VEuPathDB" id="FungiDB:TRIREDRAFT_59073"/>
<dbReference type="eggNOG" id="ENOG502RQJN">
    <property type="taxonomic scope" value="Eukaryota"/>
</dbReference>
<dbReference type="HOGENOM" id="CLU_018825_2_0_1"/>
<dbReference type="OrthoDB" id="2594507at2759"/>
<dbReference type="Proteomes" id="UP000008984">
    <property type="component" value="Unassembled WGS sequence"/>
</dbReference>
<dbReference type="GO" id="GO:0016829">
    <property type="term" value="F:lyase activity"/>
    <property type="evidence" value="ECO:0007669"/>
    <property type="project" value="UniProtKB-KW"/>
</dbReference>
<dbReference type="CDD" id="cd01355">
    <property type="entry name" value="AcnX"/>
    <property type="match status" value="1"/>
</dbReference>
<dbReference type="CDD" id="cd01356">
    <property type="entry name" value="AcnX_swivel"/>
    <property type="match status" value="1"/>
</dbReference>
<dbReference type="Gene3D" id="3.50.30.10">
    <property type="entry name" value="Phosphohistidine domain"/>
    <property type="match status" value="1"/>
</dbReference>
<dbReference type="InterPro" id="IPR012047">
    <property type="entry name" value="AcnX"/>
</dbReference>
<dbReference type="InterPro" id="IPR007506">
    <property type="entry name" value="PMDh-L-like_dom"/>
</dbReference>
<dbReference type="InterPro" id="IPR002840">
    <property type="entry name" value="PMDh-S-like_dom"/>
</dbReference>
<dbReference type="PANTHER" id="PTHR36577">
    <property type="entry name" value="DUF521 DOMAIN PROTEIN (AFU_ORTHOLOGUE AFUA_6G00490)"/>
    <property type="match status" value="1"/>
</dbReference>
<dbReference type="PANTHER" id="PTHR36577:SF3">
    <property type="entry name" value="DUF521 DOMAIN PROTEIN (AFU_ORTHOLOGUE AFUA_6G00490)"/>
    <property type="match status" value="1"/>
</dbReference>
<dbReference type="Pfam" id="PF04412">
    <property type="entry name" value="AcnX"/>
    <property type="match status" value="1"/>
</dbReference>
<dbReference type="Pfam" id="PF01989">
    <property type="entry name" value="AcnX_swivel_put"/>
    <property type="match status" value="1"/>
</dbReference>
<dbReference type="PIRSF" id="PIRSF036630">
    <property type="entry name" value="UCP036630"/>
    <property type="match status" value="1"/>
</dbReference>
<dbReference type="SUPFAM" id="SSF52016">
    <property type="entry name" value="LeuD/IlvD-like"/>
    <property type="match status" value="1"/>
</dbReference>
<name>C3HPD_HYPJQ</name>
<evidence type="ECO:0000250" key="1">
    <source>
        <dbReference type="UniProtKB" id="A9CH00"/>
    </source>
</evidence>
<evidence type="ECO:0000250" key="2">
    <source>
        <dbReference type="UniProtKB" id="Q9I485"/>
    </source>
</evidence>
<evidence type="ECO:0000269" key="3">
    <source>
    </source>
</evidence>
<evidence type="ECO:0000303" key="4">
    <source>
    </source>
</evidence>
<evidence type="ECO:0000305" key="5"/>
<evidence type="ECO:0000312" key="6">
    <source>
        <dbReference type="EMBL" id="EGR50197.1"/>
    </source>
</evidence>
<evidence type="ECO:0000312" key="7">
    <source>
        <dbReference type="Proteomes" id="UP000008984"/>
    </source>
</evidence>
<protein>
    <recommendedName>
        <fullName evidence="4">Cis-3-hydroxy-L-proline dehydratase</fullName>
        <shortName evidence="5">c3LHyp dehydratase</shortName>
        <shortName evidence="5">c3LHypD</shortName>
        <ecNumber evidence="3">4.2.1.171</ecNumber>
    </recommendedName>
    <alternativeName>
        <fullName evidence="5">Aconitase X</fullName>
        <shortName evidence="5">AcnX</shortName>
    </alternativeName>
    <alternativeName>
        <fullName evidence="4">TrLhpI</fullName>
    </alternativeName>
</protein>
<keyword id="KW-0408">Iron</keyword>
<keyword id="KW-0456">Lyase</keyword>
<keyword id="KW-1185">Reference proteome</keyword>
<gene>
    <name evidence="4" type="primary">lhpI</name>
    <name evidence="4 6" type="ORF">TRIREDRAFT_59073</name>
</gene>
<accession>G0REW7</accession>
<sequence length="596" mass="63949">MLPRNSHYKGTAYVHGKASGPLIASNLELSFWGGVDPQTSQVIDHHHPLSGEFLQDAILAIPSGRGSCSGSGVLLELLLSGKGPKALIFSRREDILTLGVVVAEEIFGRSIPVVVLAVTDFEELLAARYVAVNGGTVSTVQLGDAMHSPEDDSTEPLDTTLGLSIELSNKDYAFLSGAHGQAAQAAMRIILRMAAMEGARKLIDITQVHIDGCVYTGPASLKFAETLRDWGGKVVTPTTLNSIFVDQRRWRAQGVPSVFGEAAEKLATAYTDMGALPTYTCAPYLLPSAPKRGEQVAWAESNAVVYANSVLGAKTMKYPDFLDICIALTGRAPYGGLHIESNRSASLCVELPVLQKADIDDSFYPLLGYHVGRIAGSRIPVVVGVDVLRPSRDDLKAFGAAFATMASAPMFHIVGVTPEAATLQDAIGRREGVECIRLDVTELQTVWRTLNSAEDNSPVDLISLGNPHFSIAELRRLASLCRGRAKHDKVAVMVTCARATYGLADQAGLIEELHRFGVEVITDTCWCMIGEPVIPTTSRTIMTNSAKYAHYGPGLTGRRFYFGSLARCVDAACDGYFDTKMPGFISSCIPKGAGVR</sequence>
<reference evidence="6 7" key="1">
    <citation type="journal article" date="2008" name="Nat. Biotechnol.">
        <title>Genome sequencing and analysis of the biomass-degrading fungus Trichoderma reesei (syn. Hypocrea jecorina).</title>
        <authorList>
            <person name="Martinez D."/>
            <person name="Berka R.M."/>
            <person name="Henrissat B."/>
            <person name="Saloheimo M."/>
            <person name="Arvas M."/>
            <person name="Baker S.E."/>
            <person name="Chapman J."/>
            <person name="Chertkov O."/>
            <person name="Coutinho P.M."/>
            <person name="Cullen D."/>
            <person name="Danchin E.G."/>
            <person name="Grigoriev I.V."/>
            <person name="Harris P."/>
            <person name="Jackson M."/>
            <person name="Kubicek C.P."/>
            <person name="Han C.S."/>
            <person name="Ho I."/>
            <person name="Larrondo L.F."/>
            <person name="de Leon A.L."/>
            <person name="Magnuson J.K."/>
            <person name="Merino S."/>
            <person name="Misra M."/>
            <person name="Nelson B."/>
            <person name="Putnam N."/>
            <person name="Robbertse B."/>
            <person name="Salamov A.A."/>
            <person name="Schmoll M."/>
            <person name="Terry A."/>
            <person name="Thayer N."/>
            <person name="Westerholm-Parvinen A."/>
            <person name="Schoch C.L."/>
            <person name="Yao J."/>
            <person name="Barabote R."/>
            <person name="Nelson M.A."/>
            <person name="Detter C."/>
            <person name="Bruce D."/>
            <person name="Kuske C.R."/>
            <person name="Xie G."/>
            <person name="Richardson P."/>
            <person name="Rokhsar D.S."/>
            <person name="Lucas S.M."/>
            <person name="Rubin E.M."/>
            <person name="Dunn-Coleman N."/>
            <person name="Ward M."/>
            <person name="Brettin T.S."/>
        </authorList>
    </citation>
    <scope>NUCLEOTIDE SEQUENCE [LARGE SCALE GENOMIC DNA]</scope>
    <source>
        <strain evidence="6 7">QM6a</strain>
    </source>
</reference>
<reference key="2">
    <citation type="journal article" date="2016" name="Sci. Rep.">
        <title>Functional characterization of aconitase X as a cis-3-hydroxy-L-proline dehydratase.</title>
        <authorList>
            <person name="Watanabe S."/>
            <person name="Tajima K."/>
            <person name="Fujii S."/>
            <person name="Fukumori F."/>
            <person name="Hara R."/>
            <person name="Fukuda R."/>
            <person name="Miyazaki M."/>
            <person name="Kino K."/>
            <person name="Watanabe Y."/>
        </authorList>
    </citation>
    <scope>FUNCTION</scope>
    <scope>CATALYTIC ACTIVITY</scope>
    <scope>SUBSTRATE SPECIFICITY</scope>
    <scope>ACTIVITY REGULATION</scope>
    <scope>BIOPHYSICOCHEMICAL PROPERTIES</scope>
    <scope>SUBUNIT</scope>
    <source>
        <strain evidence="4">QM6a</strain>
    </source>
</reference>